<name>EI01_LITRU</name>
<reference key="1">
    <citation type="journal article" date="1999" name="Aust. J. Chem.">
        <title>Peptides from the skin glands of the Australian buzzing tree frog Litori electrica. Comparison with the skin peptides from Litoria rubella.</title>
        <authorList>
            <person name="Wabnitz P.A."/>
            <person name="Bowie J.H."/>
            <person name="Tyler M.J."/>
            <person name="Wallace J.C."/>
        </authorList>
    </citation>
    <scope>PROTEIN SEQUENCE</scope>
    <scope>AMIDATION AT MET-6</scope>
    <source>
        <tissue>Skin secretion</tissue>
    </source>
</reference>
<keyword id="KW-0027">Amidation</keyword>
<keyword id="KW-0878">Amphibian defense peptide</keyword>
<keyword id="KW-0903">Direct protein sequencing</keyword>
<keyword id="KW-0964">Secreted</keyword>
<organism>
    <name type="scientific">Litoria rubella</name>
    <name type="common">Desert tree frog</name>
    <name type="synonym">Hyla rubella</name>
    <dbReference type="NCBI Taxonomy" id="104895"/>
    <lineage>
        <taxon>Eukaryota</taxon>
        <taxon>Metazoa</taxon>
        <taxon>Chordata</taxon>
        <taxon>Craniata</taxon>
        <taxon>Vertebrata</taxon>
        <taxon>Euteleostomi</taxon>
        <taxon>Amphibia</taxon>
        <taxon>Batrachia</taxon>
        <taxon>Anura</taxon>
        <taxon>Neobatrachia</taxon>
        <taxon>Hyloidea</taxon>
        <taxon>Hylidae</taxon>
        <taxon>Pelodryadinae</taxon>
        <taxon>Litoria</taxon>
    </lineage>
</organism>
<feature type="peptide" id="PRO_0000043791" description="Electrin-1">
    <location>
        <begin position="1"/>
        <end position="6"/>
    </location>
</feature>
<feature type="modified residue" description="Methionine amide" evidence="1">
    <location>
        <position position="6"/>
    </location>
</feature>
<evidence type="ECO:0000269" key="1">
    <source ref="1"/>
</evidence>
<sequence>FVPIWM</sequence>
<accession>P82096</accession>
<protein>
    <recommendedName>
        <fullName>Electrin-1</fullName>
    </recommendedName>
</protein>
<dbReference type="GO" id="GO:0005576">
    <property type="term" value="C:extracellular region"/>
    <property type="evidence" value="ECO:0007669"/>
    <property type="project" value="UniProtKB-SubCell"/>
</dbReference>
<dbReference type="GO" id="GO:0006952">
    <property type="term" value="P:defense response"/>
    <property type="evidence" value="ECO:0007669"/>
    <property type="project" value="UniProtKB-KW"/>
</dbReference>
<proteinExistence type="evidence at protein level"/>
<comment type="subcellular location">
    <subcellularLocation>
        <location>Secreted</location>
    </subcellularLocation>
</comment>
<comment type="tissue specificity">
    <text>Expressed by the skin glands.</text>
</comment>